<protein>
    <recommendedName>
        <fullName evidence="1">Glycerol-1-phosphate dehydrogenase [NAD(P)+]</fullName>
        <shortName evidence="1">G1P dehydrogenase</shortName>
        <shortName evidence="1">G1PDH</shortName>
        <ecNumber evidence="1">1.1.1.261</ecNumber>
    </recommendedName>
    <alternativeName>
        <fullName evidence="1">Enantiomeric glycerophosphate synthase</fullName>
    </alternativeName>
    <alternativeName>
        <fullName evidence="1">sn-glycerol-1-phosphate dehydrogenase</fullName>
    </alternativeName>
</protein>
<keyword id="KW-0963">Cytoplasm</keyword>
<keyword id="KW-0444">Lipid biosynthesis</keyword>
<keyword id="KW-0443">Lipid metabolism</keyword>
<keyword id="KW-0479">Metal-binding</keyword>
<keyword id="KW-0520">NAD</keyword>
<keyword id="KW-0521">NADP</keyword>
<keyword id="KW-0533">Nickel</keyword>
<keyword id="KW-0560">Oxidoreductase</keyword>
<keyword id="KW-0594">Phospholipid biosynthesis</keyword>
<keyword id="KW-1208">Phospholipid metabolism</keyword>
<keyword id="KW-1185">Reference proteome</keyword>
<comment type="function">
    <text evidence="1">Catalyzes the NAD(P)H-dependent reduction of dihydroxyacetonephosphate (DHAP or glycerone phosphate) to glycerol 1-phosphate (G1P). The G1P thus generated is probably used for the synthesis of phosphoglycerolipids in Gram-positive bacterial species.</text>
</comment>
<comment type="catalytic activity">
    <reaction evidence="1">
        <text>sn-glycerol 1-phosphate + NAD(+) = dihydroxyacetone phosphate + NADH + H(+)</text>
        <dbReference type="Rhea" id="RHEA:21412"/>
        <dbReference type="ChEBI" id="CHEBI:15378"/>
        <dbReference type="ChEBI" id="CHEBI:57540"/>
        <dbReference type="ChEBI" id="CHEBI:57642"/>
        <dbReference type="ChEBI" id="CHEBI:57685"/>
        <dbReference type="ChEBI" id="CHEBI:57945"/>
        <dbReference type="EC" id="1.1.1.261"/>
    </reaction>
</comment>
<comment type="catalytic activity">
    <reaction evidence="1">
        <text>sn-glycerol 1-phosphate + NADP(+) = dihydroxyacetone phosphate + NADPH + H(+)</text>
        <dbReference type="Rhea" id="RHEA:21416"/>
        <dbReference type="ChEBI" id="CHEBI:15378"/>
        <dbReference type="ChEBI" id="CHEBI:57642"/>
        <dbReference type="ChEBI" id="CHEBI:57685"/>
        <dbReference type="ChEBI" id="CHEBI:57783"/>
        <dbReference type="ChEBI" id="CHEBI:58349"/>
        <dbReference type="EC" id="1.1.1.261"/>
    </reaction>
</comment>
<comment type="cofactor">
    <cofactor evidence="1">
        <name>Ni(2+)</name>
        <dbReference type="ChEBI" id="CHEBI:49786"/>
    </cofactor>
    <text evidence="1">Binds 1 nickel ion per subunit.</text>
</comment>
<comment type="subunit">
    <text evidence="1">Homodimer.</text>
</comment>
<comment type="subcellular location">
    <subcellularLocation>
        <location evidence="1">Cytoplasm</location>
    </subcellularLocation>
</comment>
<comment type="similarity">
    <text evidence="1">Belongs to the glycerol-1-phosphate dehydrogenase family.</text>
</comment>
<name>G1PDH_HALH5</name>
<accession>Q9KBR3</accession>
<gene>
    <name evidence="1" type="primary">egsA</name>
    <name type="ordered locus">BH1862</name>
</gene>
<evidence type="ECO:0000255" key="1">
    <source>
        <dbReference type="HAMAP-Rule" id="MF_00497"/>
    </source>
</evidence>
<feature type="chain" id="PRO_0000350637" description="Glycerol-1-phosphate dehydrogenase [NAD(P)+]">
    <location>
        <begin position="1"/>
        <end position="399"/>
    </location>
</feature>
<feature type="binding site" evidence="1">
    <location>
        <position position="56"/>
    </location>
    <ligand>
        <name>NAD(+)</name>
        <dbReference type="ChEBI" id="CHEBI:57540"/>
    </ligand>
</feature>
<feature type="binding site" evidence="1">
    <location>
        <begin position="118"/>
        <end position="122"/>
    </location>
    <ligand>
        <name>NAD(+)</name>
        <dbReference type="ChEBI" id="CHEBI:57540"/>
    </ligand>
</feature>
<feature type="binding site" evidence="1">
    <location>
        <begin position="140"/>
        <end position="143"/>
    </location>
    <ligand>
        <name>NAD(+)</name>
        <dbReference type="ChEBI" id="CHEBI:57540"/>
    </ligand>
</feature>
<feature type="binding site" evidence="1">
    <location>
        <position position="145"/>
    </location>
    <ligand>
        <name>substrate</name>
    </ligand>
</feature>
<feature type="binding site" evidence="1">
    <location>
        <position position="149"/>
    </location>
    <ligand>
        <name>NAD(+)</name>
        <dbReference type="ChEBI" id="CHEBI:57540"/>
    </ligand>
</feature>
<feature type="binding site" evidence="1">
    <location>
        <position position="192"/>
    </location>
    <ligand>
        <name>Ni(2+)</name>
        <dbReference type="ChEBI" id="CHEBI:49786"/>
        <note>catalytic</note>
    </ligand>
</feature>
<feature type="binding site" evidence="1">
    <location>
        <position position="192"/>
    </location>
    <ligand>
        <name>substrate</name>
    </ligand>
</feature>
<feature type="binding site" evidence="1">
    <location>
        <position position="272"/>
    </location>
    <ligand>
        <name>Ni(2+)</name>
        <dbReference type="ChEBI" id="CHEBI:49786"/>
        <note>catalytic</note>
    </ligand>
</feature>
<feature type="binding site" evidence="1">
    <location>
        <position position="276"/>
    </location>
    <ligand>
        <name>substrate</name>
    </ligand>
</feature>
<feature type="binding site" evidence="1">
    <location>
        <position position="292"/>
    </location>
    <ligand>
        <name>Ni(2+)</name>
        <dbReference type="ChEBI" id="CHEBI:49786"/>
        <note>catalytic</note>
    </ligand>
</feature>
<reference key="1">
    <citation type="journal article" date="2000" name="Nucleic Acids Res.">
        <title>Complete genome sequence of the alkaliphilic bacterium Bacillus halodurans and genomic sequence comparison with Bacillus subtilis.</title>
        <authorList>
            <person name="Takami H."/>
            <person name="Nakasone K."/>
            <person name="Takaki Y."/>
            <person name="Maeno G."/>
            <person name="Sasaki R."/>
            <person name="Masui N."/>
            <person name="Fuji F."/>
            <person name="Hirama C."/>
            <person name="Nakamura Y."/>
            <person name="Ogasawara N."/>
            <person name="Kuhara S."/>
            <person name="Horikoshi K."/>
        </authorList>
    </citation>
    <scope>NUCLEOTIDE SEQUENCE [LARGE SCALE GENOMIC DNA]</scope>
    <source>
        <strain>ATCC BAA-125 / DSM 18197 / FERM 7344 / JCM 9153 / C-125</strain>
    </source>
</reference>
<dbReference type="EC" id="1.1.1.261" evidence="1"/>
<dbReference type="EMBL" id="BA000004">
    <property type="protein sequence ID" value="BAB05581.1"/>
    <property type="molecule type" value="Genomic_DNA"/>
</dbReference>
<dbReference type="PIR" id="F83882">
    <property type="entry name" value="F83882"/>
</dbReference>
<dbReference type="RefSeq" id="WP_010898023.1">
    <property type="nucleotide sequence ID" value="NC_002570.2"/>
</dbReference>
<dbReference type="SMR" id="Q9KBR3"/>
<dbReference type="STRING" id="272558.gene:10727760"/>
<dbReference type="KEGG" id="bha:BH1862"/>
<dbReference type="eggNOG" id="COG0371">
    <property type="taxonomic scope" value="Bacteria"/>
</dbReference>
<dbReference type="HOGENOM" id="CLU_038362_1_0_9"/>
<dbReference type="OrthoDB" id="9763580at2"/>
<dbReference type="Proteomes" id="UP000001258">
    <property type="component" value="Chromosome"/>
</dbReference>
<dbReference type="GO" id="GO:0005737">
    <property type="term" value="C:cytoplasm"/>
    <property type="evidence" value="ECO:0007669"/>
    <property type="project" value="UniProtKB-SubCell"/>
</dbReference>
<dbReference type="GO" id="GO:0106357">
    <property type="term" value="F:glycerol-1-phosphate dehydrogenase (NAD+) activity"/>
    <property type="evidence" value="ECO:0007669"/>
    <property type="project" value="RHEA"/>
</dbReference>
<dbReference type="GO" id="GO:0106358">
    <property type="term" value="F:glycerol-1-phosphate dehydrogenase (NADP+) activity"/>
    <property type="evidence" value="ECO:0007669"/>
    <property type="project" value="RHEA"/>
</dbReference>
<dbReference type="GO" id="GO:0046872">
    <property type="term" value="F:metal ion binding"/>
    <property type="evidence" value="ECO:0007669"/>
    <property type="project" value="UniProtKB-KW"/>
</dbReference>
<dbReference type="GO" id="GO:0006650">
    <property type="term" value="P:glycerophospholipid metabolic process"/>
    <property type="evidence" value="ECO:0007669"/>
    <property type="project" value="UniProtKB-UniRule"/>
</dbReference>
<dbReference type="GO" id="GO:0008654">
    <property type="term" value="P:phospholipid biosynthetic process"/>
    <property type="evidence" value="ECO:0007669"/>
    <property type="project" value="UniProtKB-KW"/>
</dbReference>
<dbReference type="CDD" id="cd08175">
    <property type="entry name" value="G1PDH"/>
    <property type="match status" value="1"/>
</dbReference>
<dbReference type="Gene3D" id="3.40.50.1970">
    <property type="match status" value="1"/>
</dbReference>
<dbReference type="Gene3D" id="1.20.1090.10">
    <property type="entry name" value="Dehydroquinate synthase-like - alpha domain"/>
    <property type="match status" value="1"/>
</dbReference>
<dbReference type="HAMAP" id="MF_00497_B">
    <property type="entry name" value="G1P_dehydrogenase_B"/>
    <property type="match status" value="1"/>
</dbReference>
<dbReference type="InterPro" id="IPR023003">
    <property type="entry name" value="G1P_dehydrogenase_bac"/>
</dbReference>
<dbReference type="InterPro" id="IPR032837">
    <property type="entry name" value="G1PDH"/>
</dbReference>
<dbReference type="InterPro" id="IPR016205">
    <property type="entry name" value="Glycerol_DH"/>
</dbReference>
<dbReference type="PANTHER" id="PTHR43616">
    <property type="entry name" value="GLYCEROL DEHYDROGENASE"/>
    <property type="match status" value="1"/>
</dbReference>
<dbReference type="PANTHER" id="PTHR43616:SF5">
    <property type="entry name" value="GLYCEROL DEHYDROGENASE 1"/>
    <property type="match status" value="1"/>
</dbReference>
<dbReference type="Pfam" id="PF13685">
    <property type="entry name" value="Fe-ADH_2"/>
    <property type="match status" value="1"/>
</dbReference>
<dbReference type="SUPFAM" id="SSF56796">
    <property type="entry name" value="Dehydroquinate synthase-like"/>
    <property type="match status" value="1"/>
</dbReference>
<sequence>MNHLLKQAKRVASECECGHEHQWIEMDELQLGRNAINYLPEYLHEKGLLHVTIVADANTYAVAGQLVAQLLKGRGIDVENCILKEQGALTLLADEHGLGQLVIGAAKETDVFLAVGAGTIHDLTRIASYKFGKPFIAIPTAPSVDGFTSMGAPVIRDGVKITFQTQAPIALFADLDFLTQAPRSMVAAGFGDMLGKSTSLVDWQVSHMLNDEPFCPAVFHMTKSALTMCMEHADEIAACNEQGIRLLTEALIMSGLAMLIFGHSHPASGAEHHLSHYWEMAFLRSGGTQPLHGAKVGYATMLISALYKNEARKKIETFQGEGSPLVNSIHKHRERLLMLIDTIPESSDIQRLLESVGGAVKSADLALADSLEDEALEKAHKLRERCTLLYCLNEHLKTS</sequence>
<organism>
    <name type="scientific">Halalkalibacterium halodurans (strain ATCC BAA-125 / DSM 18197 / FERM 7344 / JCM 9153 / C-125)</name>
    <name type="common">Bacillus halodurans</name>
    <dbReference type="NCBI Taxonomy" id="272558"/>
    <lineage>
        <taxon>Bacteria</taxon>
        <taxon>Bacillati</taxon>
        <taxon>Bacillota</taxon>
        <taxon>Bacilli</taxon>
        <taxon>Bacillales</taxon>
        <taxon>Bacillaceae</taxon>
        <taxon>Halalkalibacterium (ex Joshi et al. 2022)</taxon>
    </lineage>
</organism>
<proteinExistence type="inferred from homology"/>